<accession>Q02FR2</accession>
<gene>
    <name evidence="1" type="primary">dnaJ</name>
    <name type="ordered locus">PA14_62960</name>
</gene>
<reference key="1">
    <citation type="journal article" date="2006" name="Genome Biol.">
        <title>Genomic analysis reveals that Pseudomonas aeruginosa virulence is combinatorial.</title>
        <authorList>
            <person name="Lee D.G."/>
            <person name="Urbach J.M."/>
            <person name="Wu G."/>
            <person name="Liberati N.T."/>
            <person name="Feinbaum R.L."/>
            <person name="Miyata S."/>
            <person name="Diggins L.T."/>
            <person name="He J."/>
            <person name="Saucier M."/>
            <person name="Deziel E."/>
            <person name="Friedman L."/>
            <person name="Li L."/>
            <person name="Grills G."/>
            <person name="Montgomery K."/>
            <person name="Kucherlapati R."/>
            <person name="Rahme L.G."/>
            <person name="Ausubel F.M."/>
        </authorList>
    </citation>
    <scope>NUCLEOTIDE SEQUENCE [LARGE SCALE GENOMIC DNA]</scope>
    <source>
        <strain>UCBPP-PA14</strain>
    </source>
</reference>
<evidence type="ECO:0000255" key="1">
    <source>
        <dbReference type="HAMAP-Rule" id="MF_01152"/>
    </source>
</evidence>
<feature type="chain" id="PRO_1000085249" description="Chaperone protein DnaJ">
    <location>
        <begin position="1"/>
        <end position="377"/>
    </location>
</feature>
<feature type="domain" description="J" evidence="1">
    <location>
        <begin position="5"/>
        <end position="70"/>
    </location>
</feature>
<feature type="repeat" description="CXXCXGXG motif">
    <location>
        <begin position="149"/>
        <end position="156"/>
    </location>
</feature>
<feature type="repeat" description="CXXCXGXG motif">
    <location>
        <begin position="166"/>
        <end position="173"/>
    </location>
</feature>
<feature type="repeat" description="CXXCXGXG motif">
    <location>
        <begin position="188"/>
        <end position="195"/>
    </location>
</feature>
<feature type="repeat" description="CXXCXGXG motif">
    <location>
        <begin position="202"/>
        <end position="209"/>
    </location>
</feature>
<feature type="zinc finger region" description="CR-type" evidence="1">
    <location>
        <begin position="136"/>
        <end position="214"/>
    </location>
</feature>
<feature type="binding site" evidence="1">
    <location>
        <position position="149"/>
    </location>
    <ligand>
        <name>Zn(2+)</name>
        <dbReference type="ChEBI" id="CHEBI:29105"/>
        <label>1</label>
    </ligand>
</feature>
<feature type="binding site" evidence="1">
    <location>
        <position position="152"/>
    </location>
    <ligand>
        <name>Zn(2+)</name>
        <dbReference type="ChEBI" id="CHEBI:29105"/>
        <label>1</label>
    </ligand>
</feature>
<feature type="binding site" evidence="1">
    <location>
        <position position="166"/>
    </location>
    <ligand>
        <name>Zn(2+)</name>
        <dbReference type="ChEBI" id="CHEBI:29105"/>
        <label>2</label>
    </ligand>
</feature>
<feature type="binding site" evidence="1">
    <location>
        <position position="169"/>
    </location>
    <ligand>
        <name>Zn(2+)</name>
        <dbReference type="ChEBI" id="CHEBI:29105"/>
        <label>2</label>
    </ligand>
</feature>
<feature type="binding site" evidence="1">
    <location>
        <position position="188"/>
    </location>
    <ligand>
        <name>Zn(2+)</name>
        <dbReference type="ChEBI" id="CHEBI:29105"/>
        <label>2</label>
    </ligand>
</feature>
<feature type="binding site" evidence="1">
    <location>
        <position position="191"/>
    </location>
    <ligand>
        <name>Zn(2+)</name>
        <dbReference type="ChEBI" id="CHEBI:29105"/>
        <label>2</label>
    </ligand>
</feature>
<feature type="binding site" evidence="1">
    <location>
        <position position="202"/>
    </location>
    <ligand>
        <name>Zn(2+)</name>
        <dbReference type="ChEBI" id="CHEBI:29105"/>
        <label>1</label>
    </ligand>
</feature>
<feature type="binding site" evidence="1">
    <location>
        <position position="205"/>
    </location>
    <ligand>
        <name>Zn(2+)</name>
        <dbReference type="ChEBI" id="CHEBI:29105"/>
        <label>1</label>
    </ligand>
</feature>
<sequence>MAKRDFYEVLGVERGASEADLKKAYRRLAMKYHPDRNPGDKEAEDKFKEANEAYEVLSDASKRAAYDQYGHAGVDPNMGGGAGAGFGGASFSDIFGDVFSDFFGGGGARGGSRGGAQRGADLRYTLDLDLEEAVRGTTVTIRVPTLVGCKTCNGSGAKPGTTPVTCTTCGGIGQVRMQQGFFSVQQTCPRCHGTGKMISDPCGSCHGQGRVEEQKTLSVKVPAGVDTGDRIRLTGEGEAGSMGGPAGDLYVVVNVREHPIFQRDGKHLYCEVPISFADAALGGELEVPTLDGRVKLKIPESTQTGKLFRLRGKGVAPVRGGGAGDLMCKVVVETPVNLDKRQRELLEEFRKSLQSDTSHSPKASGWFEGMKRFFDDL</sequence>
<organism>
    <name type="scientific">Pseudomonas aeruginosa (strain UCBPP-PA14)</name>
    <dbReference type="NCBI Taxonomy" id="208963"/>
    <lineage>
        <taxon>Bacteria</taxon>
        <taxon>Pseudomonadati</taxon>
        <taxon>Pseudomonadota</taxon>
        <taxon>Gammaproteobacteria</taxon>
        <taxon>Pseudomonadales</taxon>
        <taxon>Pseudomonadaceae</taxon>
        <taxon>Pseudomonas</taxon>
    </lineage>
</organism>
<dbReference type="EMBL" id="CP000438">
    <property type="protein sequence ID" value="ABJ14143.1"/>
    <property type="molecule type" value="Genomic_DNA"/>
</dbReference>
<dbReference type="RefSeq" id="WP_003095211.1">
    <property type="nucleotide sequence ID" value="NZ_CP034244.1"/>
</dbReference>
<dbReference type="SMR" id="Q02FR2"/>
<dbReference type="KEGG" id="pau:PA14_62960"/>
<dbReference type="PseudoCAP" id="PA14_62960"/>
<dbReference type="HOGENOM" id="CLU_017633_0_7_6"/>
<dbReference type="BioCyc" id="PAER208963:G1G74-5325-MONOMER"/>
<dbReference type="Proteomes" id="UP000000653">
    <property type="component" value="Chromosome"/>
</dbReference>
<dbReference type="GO" id="GO:0005737">
    <property type="term" value="C:cytoplasm"/>
    <property type="evidence" value="ECO:0007669"/>
    <property type="project" value="UniProtKB-SubCell"/>
</dbReference>
<dbReference type="GO" id="GO:0005524">
    <property type="term" value="F:ATP binding"/>
    <property type="evidence" value="ECO:0007669"/>
    <property type="project" value="InterPro"/>
</dbReference>
<dbReference type="GO" id="GO:0031072">
    <property type="term" value="F:heat shock protein binding"/>
    <property type="evidence" value="ECO:0007669"/>
    <property type="project" value="InterPro"/>
</dbReference>
<dbReference type="GO" id="GO:0051082">
    <property type="term" value="F:unfolded protein binding"/>
    <property type="evidence" value="ECO:0007669"/>
    <property type="project" value="UniProtKB-UniRule"/>
</dbReference>
<dbReference type="GO" id="GO:0008270">
    <property type="term" value="F:zinc ion binding"/>
    <property type="evidence" value="ECO:0007669"/>
    <property type="project" value="UniProtKB-UniRule"/>
</dbReference>
<dbReference type="GO" id="GO:0051085">
    <property type="term" value="P:chaperone cofactor-dependent protein refolding"/>
    <property type="evidence" value="ECO:0007669"/>
    <property type="project" value="TreeGrafter"/>
</dbReference>
<dbReference type="GO" id="GO:0006260">
    <property type="term" value="P:DNA replication"/>
    <property type="evidence" value="ECO:0007669"/>
    <property type="project" value="UniProtKB-KW"/>
</dbReference>
<dbReference type="GO" id="GO:0042026">
    <property type="term" value="P:protein refolding"/>
    <property type="evidence" value="ECO:0007669"/>
    <property type="project" value="TreeGrafter"/>
</dbReference>
<dbReference type="GO" id="GO:0009408">
    <property type="term" value="P:response to heat"/>
    <property type="evidence" value="ECO:0007669"/>
    <property type="project" value="InterPro"/>
</dbReference>
<dbReference type="CDD" id="cd06257">
    <property type="entry name" value="DnaJ"/>
    <property type="match status" value="1"/>
</dbReference>
<dbReference type="CDD" id="cd10747">
    <property type="entry name" value="DnaJ_C"/>
    <property type="match status" value="1"/>
</dbReference>
<dbReference type="CDD" id="cd10719">
    <property type="entry name" value="DnaJ_zf"/>
    <property type="match status" value="1"/>
</dbReference>
<dbReference type="FunFam" id="1.10.287.110:FF:000051">
    <property type="entry name" value="Molecular chaperone DnaJ"/>
    <property type="match status" value="1"/>
</dbReference>
<dbReference type="FunFam" id="2.10.230.10:FF:000002">
    <property type="entry name" value="Molecular chaperone DnaJ"/>
    <property type="match status" value="1"/>
</dbReference>
<dbReference type="FunFam" id="2.60.260.20:FF:000004">
    <property type="entry name" value="Molecular chaperone DnaJ"/>
    <property type="match status" value="1"/>
</dbReference>
<dbReference type="Gene3D" id="1.10.287.110">
    <property type="entry name" value="DnaJ domain"/>
    <property type="match status" value="1"/>
</dbReference>
<dbReference type="Gene3D" id="2.10.230.10">
    <property type="entry name" value="Heat shock protein DnaJ, cysteine-rich domain"/>
    <property type="match status" value="1"/>
</dbReference>
<dbReference type="Gene3D" id="2.60.260.20">
    <property type="entry name" value="Urease metallochaperone UreE, N-terminal domain"/>
    <property type="match status" value="2"/>
</dbReference>
<dbReference type="HAMAP" id="MF_01152">
    <property type="entry name" value="DnaJ"/>
    <property type="match status" value="1"/>
</dbReference>
<dbReference type="InterPro" id="IPR012724">
    <property type="entry name" value="DnaJ"/>
</dbReference>
<dbReference type="InterPro" id="IPR002939">
    <property type="entry name" value="DnaJ_C"/>
</dbReference>
<dbReference type="InterPro" id="IPR001623">
    <property type="entry name" value="DnaJ_domain"/>
</dbReference>
<dbReference type="InterPro" id="IPR018253">
    <property type="entry name" value="DnaJ_domain_CS"/>
</dbReference>
<dbReference type="InterPro" id="IPR008971">
    <property type="entry name" value="HSP40/DnaJ_pept-bd"/>
</dbReference>
<dbReference type="InterPro" id="IPR001305">
    <property type="entry name" value="HSP_DnaJ_Cys-rich_dom"/>
</dbReference>
<dbReference type="InterPro" id="IPR036410">
    <property type="entry name" value="HSP_DnaJ_Cys-rich_dom_sf"/>
</dbReference>
<dbReference type="InterPro" id="IPR036869">
    <property type="entry name" value="J_dom_sf"/>
</dbReference>
<dbReference type="NCBIfam" id="TIGR02349">
    <property type="entry name" value="DnaJ_bact"/>
    <property type="match status" value="1"/>
</dbReference>
<dbReference type="NCBIfam" id="NF008035">
    <property type="entry name" value="PRK10767.1"/>
    <property type="match status" value="1"/>
</dbReference>
<dbReference type="PANTHER" id="PTHR43096:SF48">
    <property type="entry name" value="CHAPERONE PROTEIN DNAJ"/>
    <property type="match status" value="1"/>
</dbReference>
<dbReference type="PANTHER" id="PTHR43096">
    <property type="entry name" value="DNAJ HOMOLOG 1, MITOCHONDRIAL-RELATED"/>
    <property type="match status" value="1"/>
</dbReference>
<dbReference type="Pfam" id="PF00226">
    <property type="entry name" value="DnaJ"/>
    <property type="match status" value="1"/>
</dbReference>
<dbReference type="Pfam" id="PF01556">
    <property type="entry name" value="DnaJ_C"/>
    <property type="match status" value="1"/>
</dbReference>
<dbReference type="Pfam" id="PF00684">
    <property type="entry name" value="DnaJ_CXXCXGXG"/>
    <property type="match status" value="1"/>
</dbReference>
<dbReference type="PRINTS" id="PR00625">
    <property type="entry name" value="JDOMAIN"/>
</dbReference>
<dbReference type="SMART" id="SM00271">
    <property type="entry name" value="DnaJ"/>
    <property type="match status" value="1"/>
</dbReference>
<dbReference type="SUPFAM" id="SSF46565">
    <property type="entry name" value="Chaperone J-domain"/>
    <property type="match status" value="1"/>
</dbReference>
<dbReference type="SUPFAM" id="SSF57938">
    <property type="entry name" value="DnaJ/Hsp40 cysteine-rich domain"/>
    <property type="match status" value="1"/>
</dbReference>
<dbReference type="SUPFAM" id="SSF49493">
    <property type="entry name" value="HSP40/DnaJ peptide-binding domain"/>
    <property type="match status" value="2"/>
</dbReference>
<dbReference type="PROSITE" id="PS00636">
    <property type="entry name" value="DNAJ_1"/>
    <property type="match status" value="1"/>
</dbReference>
<dbReference type="PROSITE" id="PS50076">
    <property type="entry name" value="DNAJ_2"/>
    <property type="match status" value="1"/>
</dbReference>
<dbReference type="PROSITE" id="PS51188">
    <property type="entry name" value="ZF_CR"/>
    <property type="match status" value="1"/>
</dbReference>
<comment type="function">
    <text evidence="1">Participates actively in the response to hyperosmotic and heat shock by preventing the aggregation of stress-denatured proteins and by disaggregating proteins, also in an autonomous, DnaK-independent fashion. Unfolded proteins bind initially to DnaJ; upon interaction with the DnaJ-bound protein, DnaK hydrolyzes its bound ATP, resulting in the formation of a stable complex. GrpE releases ADP from DnaK; ATP binding to DnaK triggers the release of the substrate protein, thus completing the reaction cycle. Several rounds of ATP-dependent interactions between DnaJ, DnaK and GrpE are required for fully efficient folding. Also involved, together with DnaK and GrpE, in the DNA replication of plasmids through activation of initiation proteins.</text>
</comment>
<comment type="cofactor">
    <cofactor evidence="1">
        <name>Zn(2+)</name>
        <dbReference type="ChEBI" id="CHEBI:29105"/>
    </cofactor>
    <text evidence="1">Binds 2 Zn(2+) ions per monomer.</text>
</comment>
<comment type="subunit">
    <text evidence="1">Homodimer.</text>
</comment>
<comment type="subcellular location">
    <subcellularLocation>
        <location evidence="1">Cytoplasm</location>
    </subcellularLocation>
</comment>
<comment type="domain">
    <text evidence="1">The J domain is necessary and sufficient to stimulate DnaK ATPase activity. Zinc center 1 plays an important role in the autonomous, DnaK-independent chaperone activity of DnaJ. Zinc center 2 is essential for interaction with DnaK and for DnaJ activity.</text>
</comment>
<comment type="similarity">
    <text evidence="1">Belongs to the DnaJ family.</text>
</comment>
<name>DNAJ_PSEAB</name>
<proteinExistence type="inferred from homology"/>
<protein>
    <recommendedName>
        <fullName evidence="1">Chaperone protein DnaJ</fullName>
    </recommendedName>
</protein>
<keyword id="KW-0143">Chaperone</keyword>
<keyword id="KW-0963">Cytoplasm</keyword>
<keyword id="KW-0235">DNA replication</keyword>
<keyword id="KW-0479">Metal-binding</keyword>
<keyword id="KW-0677">Repeat</keyword>
<keyword id="KW-0346">Stress response</keyword>
<keyword id="KW-0862">Zinc</keyword>
<keyword id="KW-0863">Zinc-finger</keyword>